<name>CRR46_ARATH</name>
<comment type="subcellular location">
    <subcellularLocation>
        <location evidence="3">Secreted</location>
    </subcellularLocation>
</comment>
<comment type="similarity">
    <text evidence="3">Belongs to the cysteine-rich repeat secretory protein family.</text>
</comment>
<comment type="sequence caution" evidence="3">
    <conflict type="erroneous gene model prediction">
        <sequence resource="EMBL-CDS" id="CAB45827"/>
    </conflict>
</comment>
<comment type="sequence caution" evidence="3">
    <conflict type="erroneous gene model prediction">
        <sequence resource="EMBL-CDS" id="CAB79061"/>
    </conflict>
</comment>
<feature type="signal peptide" evidence="1">
    <location>
        <begin position="1"/>
        <end position="26"/>
    </location>
</feature>
<feature type="chain" id="PRO_0000403942" description="Cysteine-rich repeat secretory protein 46">
    <location>
        <begin position="27"/>
        <end position="256"/>
    </location>
</feature>
<feature type="domain" description="Gnk2-homologous 1" evidence="2">
    <location>
        <begin position="33"/>
        <end position="136"/>
    </location>
</feature>
<feature type="domain" description="Gnk2-homologous 2" evidence="2">
    <location>
        <begin position="142"/>
        <end position="253"/>
    </location>
</feature>
<dbReference type="EMBL" id="AL080253">
    <property type="protein sequence ID" value="CAB45827.1"/>
    <property type="status" value="ALT_SEQ"/>
    <property type="molecule type" value="Genomic_DNA"/>
</dbReference>
<dbReference type="EMBL" id="AL161553">
    <property type="protein sequence ID" value="CAB79061.1"/>
    <property type="status" value="ALT_SEQ"/>
    <property type="molecule type" value="Genomic_DNA"/>
</dbReference>
<dbReference type="EMBL" id="CP002687">
    <property type="protein sequence ID" value="AEE84347.2"/>
    <property type="molecule type" value="Genomic_DNA"/>
</dbReference>
<dbReference type="PIR" id="T10595">
    <property type="entry name" value="T10595"/>
</dbReference>
<dbReference type="RefSeq" id="NP_001320013.1">
    <property type="nucleotide sequence ID" value="NM_001341449.1"/>
</dbReference>
<dbReference type="RefSeq" id="NP_567608.3">
    <property type="nucleotide sequence ID" value="NM_118177.3"/>
</dbReference>
<dbReference type="RefSeq" id="NP_567609.3">
    <property type="nucleotide sequence ID" value="NM_118178.3"/>
</dbReference>
<dbReference type="RefSeq" id="NP_567610.3">
    <property type="nucleotide sequence ID" value="NM_118179.3"/>
</dbReference>
<dbReference type="RefSeq" id="NP_567611.3">
    <property type="nucleotide sequence ID" value="NM_118180.3"/>
</dbReference>
<dbReference type="RefSeq" id="NP_567612.3">
    <property type="nucleotide sequence ID" value="NM_118181.3"/>
</dbReference>
<dbReference type="RefSeq" id="NP_567614.3">
    <property type="nucleotide sequence ID" value="NM_118183.3"/>
</dbReference>
<dbReference type="SMR" id="P0CJ53"/>
<dbReference type="EnsemblPlants" id="AT4G20580.1">
    <property type="protein sequence ID" value="AT4G20580.1"/>
    <property type="gene ID" value="AT4G20580"/>
</dbReference>
<dbReference type="EnsemblPlants" id="AT4G20590.1">
    <property type="protein sequence ID" value="AT4G20590.1"/>
    <property type="gene ID" value="AT4G20590"/>
</dbReference>
<dbReference type="EnsemblPlants" id="AT4G20600.1">
    <property type="protein sequence ID" value="AT4G20600.1"/>
    <property type="gene ID" value="AT4G20600"/>
</dbReference>
<dbReference type="EnsemblPlants" id="AT4G20610.1">
    <property type="protein sequence ID" value="AT4G20610.1"/>
    <property type="gene ID" value="AT4G20610"/>
</dbReference>
<dbReference type="EnsemblPlants" id="AT4G20620.1">
    <property type="protein sequence ID" value="AT4G20620.1"/>
    <property type="gene ID" value="AT4G20620"/>
</dbReference>
<dbReference type="EnsemblPlants" id="AT4G20630.1">
    <property type="protein sequence ID" value="AT4G20630.1"/>
    <property type="gene ID" value="AT4G20630"/>
</dbReference>
<dbReference type="EnsemblPlants" id="AT4G20640.1">
    <property type="protein sequence ID" value="AT4G20640.1"/>
    <property type="gene ID" value="AT4G20640"/>
</dbReference>
<dbReference type="GeneID" id="827809"/>
<dbReference type="Gramene" id="AT4G20580.1">
    <property type="protein sequence ID" value="AT4G20580.1"/>
    <property type="gene ID" value="AT4G20580"/>
</dbReference>
<dbReference type="Gramene" id="AT4G20590.1">
    <property type="protein sequence ID" value="AT4G20590.1"/>
    <property type="gene ID" value="AT4G20590"/>
</dbReference>
<dbReference type="Gramene" id="AT4G20600.1">
    <property type="protein sequence ID" value="AT4G20600.1"/>
    <property type="gene ID" value="AT4G20600"/>
</dbReference>
<dbReference type="Gramene" id="AT4G20610.1">
    <property type="protein sequence ID" value="AT4G20610.1"/>
    <property type="gene ID" value="AT4G20610"/>
</dbReference>
<dbReference type="Gramene" id="AT4G20620.1">
    <property type="protein sequence ID" value="AT4G20620.1"/>
    <property type="gene ID" value="AT4G20620"/>
</dbReference>
<dbReference type="Gramene" id="AT4G20630.1">
    <property type="protein sequence ID" value="AT4G20630.1"/>
    <property type="gene ID" value="AT4G20630"/>
</dbReference>
<dbReference type="Gramene" id="AT4G20640.1">
    <property type="protein sequence ID" value="AT4G20640.1"/>
    <property type="gene ID" value="AT4G20640"/>
</dbReference>
<dbReference type="KEGG" id="ath:AT4G20580"/>
<dbReference type="KEGG" id="ath:AT4G20590"/>
<dbReference type="KEGG" id="ath:AT4G20600"/>
<dbReference type="KEGG" id="ath:AT4G20610"/>
<dbReference type="KEGG" id="ath:AT4G20620"/>
<dbReference type="KEGG" id="ath:AT4G20630"/>
<dbReference type="KEGG" id="ath:AT4G20640"/>
<dbReference type="Araport" id="AT4G20610"/>
<dbReference type="TAIR" id="AT4G20610"/>
<dbReference type="HOGENOM" id="CLU_000288_35_0_1"/>
<dbReference type="InParanoid" id="P0CJ53"/>
<dbReference type="OMA" id="FIQVWNI"/>
<dbReference type="PRO" id="PR:P0CJ53"/>
<dbReference type="Proteomes" id="UP000006548">
    <property type="component" value="Chromosome 4"/>
</dbReference>
<dbReference type="ExpressionAtlas" id="P0CJ53">
    <property type="expression patterns" value="baseline"/>
</dbReference>
<dbReference type="GO" id="GO:0005576">
    <property type="term" value="C:extracellular region"/>
    <property type="evidence" value="ECO:0007669"/>
    <property type="project" value="UniProtKB-SubCell"/>
</dbReference>
<dbReference type="CDD" id="cd23509">
    <property type="entry name" value="Gnk2-like"/>
    <property type="match status" value="2"/>
</dbReference>
<dbReference type="FunFam" id="3.30.430.20:FF:000002">
    <property type="entry name" value="Cysteine-rich receptor-like protein kinase 10"/>
    <property type="match status" value="1"/>
</dbReference>
<dbReference type="Gene3D" id="3.30.430.20">
    <property type="entry name" value="Gnk2 domain, C-X8-C-X2-C motif"/>
    <property type="match status" value="2"/>
</dbReference>
<dbReference type="InterPro" id="IPR050581">
    <property type="entry name" value="CRR_secretory_protein"/>
</dbReference>
<dbReference type="InterPro" id="IPR002902">
    <property type="entry name" value="GNK2"/>
</dbReference>
<dbReference type="InterPro" id="IPR038408">
    <property type="entry name" value="GNK2_sf"/>
</dbReference>
<dbReference type="PANTHER" id="PTHR32411:SF54">
    <property type="entry name" value="CYSTEINE-RICH REPEAT SECRETORY PROTEIN 29-RELATED"/>
    <property type="match status" value="1"/>
</dbReference>
<dbReference type="PANTHER" id="PTHR32411">
    <property type="entry name" value="CYSTEINE-RICH REPEAT SECRETORY PROTEIN 38-RELATED"/>
    <property type="match status" value="1"/>
</dbReference>
<dbReference type="Pfam" id="PF01657">
    <property type="entry name" value="Stress-antifung"/>
    <property type="match status" value="2"/>
</dbReference>
<dbReference type="PROSITE" id="PS51473">
    <property type="entry name" value="GNK2"/>
    <property type="match status" value="2"/>
</dbReference>
<proteinExistence type="inferred from homology"/>
<organism>
    <name type="scientific">Arabidopsis thaliana</name>
    <name type="common">Mouse-ear cress</name>
    <dbReference type="NCBI Taxonomy" id="3702"/>
    <lineage>
        <taxon>Eukaryota</taxon>
        <taxon>Viridiplantae</taxon>
        <taxon>Streptophyta</taxon>
        <taxon>Embryophyta</taxon>
        <taxon>Tracheophyta</taxon>
        <taxon>Spermatophyta</taxon>
        <taxon>Magnoliopsida</taxon>
        <taxon>eudicotyledons</taxon>
        <taxon>Gunneridae</taxon>
        <taxon>Pentapetalae</taxon>
        <taxon>rosids</taxon>
        <taxon>malvids</taxon>
        <taxon>Brassicales</taxon>
        <taxon>Brassicaceae</taxon>
        <taxon>Camelineae</taxon>
        <taxon>Arabidopsis</taxon>
    </lineage>
</organism>
<accession>P0CJ53</accession>
<accession>F4JVK9</accession>
<accession>Q680R8</accession>
<accession>Q9S7J6</accession>
<accession>Q9SUM6</accession>
<protein>
    <recommendedName>
        <fullName>Cysteine-rich repeat secretory protein 46</fullName>
    </recommendedName>
</protein>
<evidence type="ECO:0000255" key="1"/>
<evidence type="ECO:0000255" key="2">
    <source>
        <dbReference type="PROSITE-ProRule" id="PRU00806"/>
    </source>
</evidence>
<evidence type="ECO:0000305" key="3"/>
<keyword id="KW-1185">Reference proteome</keyword>
<keyword id="KW-0677">Repeat</keyword>
<keyword id="KW-0964">Secreted</keyword>
<keyword id="KW-0732">Signal</keyword>
<sequence>MSSVFGSVHILAMIAIQLLLTHSVSSLNLTNAYLHHKCSNTQGKYKQGSAFEKNLNLVLSTITSIGNFRDGFRYTEEGEDPNNVFVMFQCRGDSYWSKCPPCISTAVSGLRRRCPRNKGAIIWYDQCLLKISSVASFNKIDYENDFYLSNPNNMSDRGLFNKETSALLEKLAYKASDRNNLDGKQLVLYAAGEKRIGTKKVYAMVQCTKDLIFTKCFECLEGILRKFPQCCDGKRGGRVFGTSCNFRYELYPFLRN</sequence>
<gene>
    <name type="primary">CRRSP46</name>
    <name type="ordered locus">At4g20610</name>
    <name type="ORF">F9F13.260</name>
</gene>
<reference key="1">
    <citation type="journal article" date="1999" name="Nature">
        <title>Sequence and analysis of chromosome 4 of the plant Arabidopsis thaliana.</title>
        <authorList>
            <person name="Mayer K.F.X."/>
            <person name="Schueller C."/>
            <person name="Wambutt R."/>
            <person name="Murphy G."/>
            <person name="Volckaert G."/>
            <person name="Pohl T."/>
            <person name="Duesterhoeft A."/>
            <person name="Stiekema W."/>
            <person name="Entian K.-D."/>
            <person name="Terryn N."/>
            <person name="Harris B."/>
            <person name="Ansorge W."/>
            <person name="Brandt P."/>
            <person name="Grivell L.A."/>
            <person name="Rieger M."/>
            <person name="Weichselgartner M."/>
            <person name="de Simone V."/>
            <person name="Obermaier B."/>
            <person name="Mache R."/>
            <person name="Mueller M."/>
            <person name="Kreis M."/>
            <person name="Delseny M."/>
            <person name="Puigdomenech P."/>
            <person name="Watson M."/>
            <person name="Schmidtheini T."/>
            <person name="Reichert B."/>
            <person name="Portetelle D."/>
            <person name="Perez-Alonso M."/>
            <person name="Boutry M."/>
            <person name="Bancroft I."/>
            <person name="Vos P."/>
            <person name="Hoheisel J."/>
            <person name="Zimmermann W."/>
            <person name="Wedler H."/>
            <person name="Ridley P."/>
            <person name="Langham S.-A."/>
            <person name="McCullagh B."/>
            <person name="Bilham L."/>
            <person name="Robben J."/>
            <person name="van der Schueren J."/>
            <person name="Grymonprez B."/>
            <person name="Chuang Y.-J."/>
            <person name="Vandenbussche F."/>
            <person name="Braeken M."/>
            <person name="Weltjens I."/>
            <person name="Voet M."/>
            <person name="Bastiaens I."/>
            <person name="Aert R."/>
            <person name="Defoor E."/>
            <person name="Weitzenegger T."/>
            <person name="Bothe G."/>
            <person name="Ramsperger U."/>
            <person name="Hilbert H."/>
            <person name="Braun M."/>
            <person name="Holzer E."/>
            <person name="Brandt A."/>
            <person name="Peters S."/>
            <person name="van Staveren M."/>
            <person name="Dirkse W."/>
            <person name="Mooijman P."/>
            <person name="Klein Lankhorst R."/>
            <person name="Rose M."/>
            <person name="Hauf J."/>
            <person name="Koetter P."/>
            <person name="Berneiser S."/>
            <person name="Hempel S."/>
            <person name="Feldpausch M."/>
            <person name="Lamberth S."/>
            <person name="Van den Daele H."/>
            <person name="De Keyser A."/>
            <person name="Buysshaert C."/>
            <person name="Gielen J."/>
            <person name="Villarroel R."/>
            <person name="De Clercq R."/>
            <person name="van Montagu M."/>
            <person name="Rogers J."/>
            <person name="Cronin A."/>
            <person name="Quail M.A."/>
            <person name="Bray-Allen S."/>
            <person name="Clark L."/>
            <person name="Doggett J."/>
            <person name="Hall S."/>
            <person name="Kay M."/>
            <person name="Lennard N."/>
            <person name="McLay K."/>
            <person name="Mayes R."/>
            <person name="Pettett A."/>
            <person name="Rajandream M.A."/>
            <person name="Lyne M."/>
            <person name="Benes V."/>
            <person name="Rechmann S."/>
            <person name="Borkova D."/>
            <person name="Bloecker H."/>
            <person name="Scharfe M."/>
            <person name="Grimm M."/>
            <person name="Loehnert T.-H."/>
            <person name="Dose S."/>
            <person name="de Haan M."/>
            <person name="Maarse A.C."/>
            <person name="Schaefer M."/>
            <person name="Mueller-Auer S."/>
            <person name="Gabel C."/>
            <person name="Fuchs M."/>
            <person name="Fartmann B."/>
            <person name="Granderath K."/>
            <person name="Dauner D."/>
            <person name="Herzl A."/>
            <person name="Neumann S."/>
            <person name="Argiriou A."/>
            <person name="Vitale D."/>
            <person name="Liguori R."/>
            <person name="Piravandi E."/>
            <person name="Massenet O."/>
            <person name="Quigley F."/>
            <person name="Clabauld G."/>
            <person name="Muendlein A."/>
            <person name="Felber R."/>
            <person name="Schnabl S."/>
            <person name="Hiller R."/>
            <person name="Schmidt W."/>
            <person name="Lecharny A."/>
            <person name="Aubourg S."/>
            <person name="Chefdor F."/>
            <person name="Cooke R."/>
            <person name="Berger C."/>
            <person name="Monfort A."/>
            <person name="Casacuberta E."/>
            <person name="Gibbons T."/>
            <person name="Weber N."/>
            <person name="Vandenbol M."/>
            <person name="Bargues M."/>
            <person name="Terol J."/>
            <person name="Torres A."/>
            <person name="Perez-Perez A."/>
            <person name="Purnelle B."/>
            <person name="Bent E."/>
            <person name="Johnson S."/>
            <person name="Tacon D."/>
            <person name="Jesse T."/>
            <person name="Heijnen L."/>
            <person name="Schwarz S."/>
            <person name="Scholler P."/>
            <person name="Heber S."/>
            <person name="Francs P."/>
            <person name="Bielke C."/>
            <person name="Frishman D."/>
            <person name="Haase D."/>
            <person name="Lemcke K."/>
            <person name="Mewes H.-W."/>
            <person name="Stocker S."/>
            <person name="Zaccaria P."/>
            <person name="Bevan M."/>
            <person name="Wilson R.K."/>
            <person name="de la Bastide M."/>
            <person name="Habermann K."/>
            <person name="Parnell L."/>
            <person name="Dedhia N."/>
            <person name="Gnoj L."/>
            <person name="Schutz K."/>
            <person name="Huang E."/>
            <person name="Spiegel L."/>
            <person name="Sekhon M."/>
            <person name="Murray J."/>
            <person name="Sheet P."/>
            <person name="Cordes M."/>
            <person name="Abu-Threideh J."/>
            <person name="Stoneking T."/>
            <person name="Kalicki J."/>
            <person name="Graves T."/>
            <person name="Harmon G."/>
            <person name="Edwards J."/>
            <person name="Latreille P."/>
            <person name="Courtney L."/>
            <person name="Cloud J."/>
            <person name="Abbott A."/>
            <person name="Scott K."/>
            <person name="Johnson D."/>
            <person name="Minx P."/>
            <person name="Bentley D."/>
            <person name="Fulton B."/>
            <person name="Miller N."/>
            <person name="Greco T."/>
            <person name="Kemp K."/>
            <person name="Kramer J."/>
            <person name="Fulton L."/>
            <person name="Mardis E."/>
            <person name="Dante M."/>
            <person name="Pepin K."/>
            <person name="Hillier L.W."/>
            <person name="Nelson J."/>
            <person name="Spieth J."/>
            <person name="Ryan E."/>
            <person name="Andrews S."/>
            <person name="Geisel C."/>
            <person name="Layman D."/>
            <person name="Du H."/>
            <person name="Ali J."/>
            <person name="Berghoff A."/>
            <person name="Jones K."/>
            <person name="Drone K."/>
            <person name="Cotton M."/>
            <person name="Joshu C."/>
            <person name="Antonoiu B."/>
            <person name="Zidanic M."/>
            <person name="Strong C."/>
            <person name="Sun H."/>
            <person name="Lamar B."/>
            <person name="Yordan C."/>
            <person name="Ma P."/>
            <person name="Zhong J."/>
            <person name="Preston R."/>
            <person name="Vil D."/>
            <person name="Shekher M."/>
            <person name="Matero A."/>
            <person name="Shah R."/>
            <person name="Swaby I.K."/>
            <person name="O'Shaughnessy A."/>
            <person name="Rodriguez M."/>
            <person name="Hoffman J."/>
            <person name="Till S."/>
            <person name="Granat S."/>
            <person name="Shohdy N."/>
            <person name="Hasegawa A."/>
            <person name="Hameed A."/>
            <person name="Lodhi M."/>
            <person name="Johnson A."/>
            <person name="Chen E."/>
            <person name="Marra M.A."/>
            <person name="Martienssen R."/>
            <person name="McCombie W.R."/>
        </authorList>
    </citation>
    <scope>NUCLEOTIDE SEQUENCE [LARGE SCALE GENOMIC DNA]</scope>
    <source>
        <strain>cv. Columbia</strain>
    </source>
</reference>
<reference key="2">
    <citation type="journal article" date="2017" name="Plant J.">
        <title>Araport11: a complete reannotation of the Arabidopsis thaliana reference genome.</title>
        <authorList>
            <person name="Cheng C.Y."/>
            <person name="Krishnakumar V."/>
            <person name="Chan A.P."/>
            <person name="Thibaud-Nissen F."/>
            <person name="Schobel S."/>
            <person name="Town C.D."/>
        </authorList>
    </citation>
    <scope>GENOME REANNOTATION</scope>
    <source>
        <strain>cv. Columbia</strain>
    </source>
</reference>
<reference key="3">
    <citation type="journal article" date="2001" name="Plant Physiol.">
        <title>A superfamily of proteins with novel cysteine-rich repeats.</title>
        <authorList>
            <person name="Chen Z."/>
        </authorList>
    </citation>
    <scope>GENE FAMILY ORGANIZATION</scope>
    <scope>NOMENCLATURE</scope>
</reference>